<gene>
    <name evidence="1" type="primary">aroA</name>
    <name type="ordered locus">CT_366</name>
</gene>
<comment type="function">
    <text evidence="1">Catalyzes the transfer of the enolpyruvyl moiety of phosphoenolpyruvate (PEP) to the 5-hydroxyl of shikimate-3-phosphate (S3P) to produce enolpyruvyl shikimate-3-phosphate and inorganic phosphate.</text>
</comment>
<comment type="catalytic activity">
    <reaction evidence="1">
        <text>3-phosphoshikimate + phosphoenolpyruvate = 5-O-(1-carboxyvinyl)-3-phosphoshikimate + phosphate</text>
        <dbReference type="Rhea" id="RHEA:21256"/>
        <dbReference type="ChEBI" id="CHEBI:43474"/>
        <dbReference type="ChEBI" id="CHEBI:57701"/>
        <dbReference type="ChEBI" id="CHEBI:58702"/>
        <dbReference type="ChEBI" id="CHEBI:145989"/>
        <dbReference type="EC" id="2.5.1.19"/>
    </reaction>
    <physiologicalReaction direction="left-to-right" evidence="1">
        <dbReference type="Rhea" id="RHEA:21257"/>
    </physiologicalReaction>
</comment>
<comment type="pathway">
    <text evidence="1">Metabolic intermediate biosynthesis; chorismate biosynthesis; chorismate from D-erythrose 4-phosphate and phosphoenolpyruvate: step 6/7.</text>
</comment>
<comment type="subunit">
    <text evidence="1">Monomer.</text>
</comment>
<comment type="subcellular location">
    <subcellularLocation>
        <location evidence="1">Cytoplasm</location>
    </subcellularLocation>
</comment>
<comment type="similarity">
    <text evidence="1 2">Belongs to the EPSP synthase family.</text>
</comment>
<protein>
    <recommendedName>
        <fullName evidence="1">3-phosphoshikimate 1-carboxyvinyltransferase</fullName>
        <ecNumber evidence="1">2.5.1.19</ecNumber>
    </recommendedName>
    <alternativeName>
        <fullName evidence="1">5-enolpyruvylshikimate-3-phosphate synthase</fullName>
        <shortName evidence="1">EPSP synthase</shortName>
        <shortName evidence="1">EPSPS</shortName>
    </alternativeName>
</protein>
<accession>O84371</accession>
<keyword id="KW-0028">Amino-acid biosynthesis</keyword>
<keyword id="KW-0057">Aromatic amino acid biosynthesis</keyword>
<keyword id="KW-0963">Cytoplasm</keyword>
<keyword id="KW-1185">Reference proteome</keyword>
<keyword id="KW-0808">Transferase</keyword>
<sequence>MVSSNQDLLISPSIPYGEIAVPPSKSHSLRAILFASLSKGTSIIENCLFSPDSQAMLTACEKMGAHVRRIGDSLHIQGNPDPHHCHPRYFHMGNSGIALRFLTALSTLSPTPTLITGSHTLKRRPIAPLLSSLKQLGAHIRQKTSSSIPFTIHGPLSPGHVTISGQDSQYASALAITAALAPYPLSFSIENLKERPWFDLTLDWLHSLNISFLRDQDSLTFPGGQSLESFSYSVPGDYSSAAFLASFGLLSSSSKPTILRNLSSQDSQGDKLLFSLLKQLGAHILIGKHHIEMHPSSFSGGEIDMDPFIDALPILAVLCCFAKNPSRLYNALGAKDKESNRIEAIAHELQKMGGSVHPTRDGLYIEPSRLHGAVVDSHNDHRIAMALAVAGVHASSGQTLLCNTQCINKSFPYFVIAAQTLHANVRHYQADFPLRSSFCR</sequence>
<organism>
    <name type="scientific">Chlamydia trachomatis serovar D (strain ATCC VR-885 / DSM 19411 / UW-3/Cx)</name>
    <dbReference type="NCBI Taxonomy" id="272561"/>
    <lineage>
        <taxon>Bacteria</taxon>
        <taxon>Pseudomonadati</taxon>
        <taxon>Chlamydiota</taxon>
        <taxon>Chlamydiia</taxon>
        <taxon>Chlamydiales</taxon>
        <taxon>Chlamydiaceae</taxon>
        <taxon>Chlamydia/Chlamydophila group</taxon>
        <taxon>Chlamydia</taxon>
    </lineage>
</organism>
<reference key="1">
    <citation type="journal article" date="1998" name="Science">
        <title>Genome sequence of an obligate intracellular pathogen of humans: Chlamydia trachomatis.</title>
        <authorList>
            <person name="Stephens R.S."/>
            <person name="Kalman S."/>
            <person name="Lammel C.J."/>
            <person name="Fan J."/>
            <person name="Marathe R."/>
            <person name="Aravind L."/>
            <person name="Mitchell W.P."/>
            <person name="Olinger L."/>
            <person name="Tatusov R.L."/>
            <person name="Zhao Q."/>
            <person name="Koonin E.V."/>
            <person name="Davis R.W."/>
        </authorList>
    </citation>
    <scope>NUCLEOTIDE SEQUENCE [LARGE SCALE GENOMIC DNA]</scope>
    <source>
        <strain>ATCC VR-885 / DSM 19411 / UW-3/Cx</strain>
    </source>
</reference>
<dbReference type="EC" id="2.5.1.19" evidence="1"/>
<dbReference type="EMBL" id="AE001273">
    <property type="protein sequence ID" value="AAC67962.1"/>
    <property type="molecule type" value="Genomic_DNA"/>
</dbReference>
<dbReference type="PIR" id="G71522">
    <property type="entry name" value="G71522"/>
</dbReference>
<dbReference type="RefSeq" id="NP_219875.1">
    <property type="nucleotide sequence ID" value="NC_000117.1"/>
</dbReference>
<dbReference type="RefSeq" id="WP_009871719.1">
    <property type="nucleotide sequence ID" value="NC_000117.1"/>
</dbReference>
<dbReference type="SMR" id="O84371"/>
<dbReference type="FunCoup" id="O84371">
    <property type="interactions" value="179"/>
</dbReference>
<dbReference type="STRING" id="272561.CT_366"/>
<dbReference type="EnsemblBacteria" id="AAC67962">
    <property type="protein sequence ID" value="AAC67962"/>
    <property type="gene ID" value="CT_366"/>
</dbReference>
<dbReference type="GeneID" id="884747"/>
<dbReference type="KEGG" id="ctr:CT_366"/>
<dbReference type="PATRIC" id="fig|272561.5.peg.395"/>
<dbReference type="HOGENOM" id="CLU_024321_0_0_0"/>
<dbReference type="InParanoid" id="O84371"/>
<dbReference type="OrthoDB" id="9809920at2"/>
<dbReference type="UniPathway" id="UPA00053">
    <property type="reaction ID" value="UER00089"/>
</dbReference>
<dbReference type="Proteomes" id="UP000000431">
    <property type="component" value="Chromosome"/>
</dbReference>
<dbReference type="GO" id="GO:0005737">
    <property type="term" value="C:cytoplasm"/>
    <property type="evidence" value="ECO:0007669"/>
    <property type="project" value="UniProtKB-SubCell"/>
</dbReference>
<dbReference type="GO" id="GO:0003866">
    <property type="term" value="F:3-phosphoshikimate 1-carboxyvinyltransferase activity"/>
    <property type="evidence" value="ECO:0000318"/>
    <property type="project" value="GO_Central"/>
</dbReference>
<dbReference type="GO" id="GO:0008652">
    <property type="term" value="P:amino acid biosynthetic process"/>
    <property type="evidence" value="ECO:0007669"/>
    <property type="project" value="UniProtKB-KW"/>
</dbReference>
<dbReference type="GO" id="GO:0009073">
    <property type="term" value="P:aromatic amino acid family biosynthetic process"/>
    <property type="evidence" value="ECO:0007669"/>
    <property type="project" value="UniProtKB-KW"/>
</dbReference>
<dbReference type="GO" id="GO:0009423">
    <property type="term" value="P:chorismate biosynthetic process"/>
    <property type="evidence" value="ECO:0000318"/>
    <property type="project" value="GO_Central"/>
</dbReference>
<dbReference type="CDD" id="cd01556">
    <property type="entry name" value="EPSP_synthase"/>
    <property type="match status" value="1"/>
</dbReference>
<dbReference type="Gene3D" id="3.65.10.10">
    <property type="entry name" value="Enolpyruvate transferase domain"/>
    <property type="match status" value="2"/>
</dbReference>
<dbReference type="HAMAP" id="MF_00210">
    <property type="entry name" value="EPSP_synth"/>
    <property type="match status" value="1"/>
</dbReference>
<dbReference type="InterPro" id="IPR001986">
    <property type="entry name" value="Enolpyruvate_Tfrase_dom"/>
</dbReference>
<dbReference type="InterPro" id="IPR036968">
    <property type="entry name" value="Enolpyruvate_Tfrase_sf"/>
</dbReference>
<dbReference type="InterPro" id="IPR006264">
    <property type="entry name" value="EPSP_synthase"/>
</dbReference>
<dbReference type="InterPro" id="IPR023193">
    <property type="entry name" value="EPSP_synthase_CS"/>
</dbReference>
<dbReference type="InterPro" id="IPR013792">
    <property type="entry name" value="RNA3'P_cycl/enolpyr_Trfase_a/b"/>
</dbReference>
<dbReference type="NCBIfam" id="TIGR01356">
    <property type="entry name" value="aroA"/>
    <property type="match status" value="1"/>
</dbReference>
<dbReference type="PANTHER" id="PTHR21090">
    <property type="entry name" value="AROM/DEHYDROQUINATE SYNTHASE"/>
    <property type="match status" value="1"/>
</dbReference>
<dbReference type="PANTHER" id="PTHR21090:SF5">
    <property type="entry name" value="PENTAFUNCTIONAL AROM POLYPEPTIDE"/>
    <property type="match status" value="1"/>
</dbReference>
<dbReference type="Pfam" id="PF00275">
    <property type="entry name" value="EPSP_synthase"/>
    <property type="match status" value="1"/>
</dbReference>
<dbReference type="PIRSF" id="PIRSF000505">
    <property type="entry name" value="EPSPS"/>
    <property type="match status" value="1"/>
</dbReference>
<dbReference type="SUPFAM" id="SSF55205">
    <property type="entry name" value="EPT/RTPC-like"/>
    <property type="match status" value="1"/>
</dbReference>
<dbReference type="PROSITE" id="PS00104">
    <property type="entry name" value="EPSP_SYNTHASE_1"/>
    <property type="match status" value="1"/>
</dbReference>
<dbReference type="PROSITE" id="PS00885">
    <property type="entry name" value="EPSP_SYNTHASE_2"/>
    <property type="match status" value="1"/>
</dbReference>
<name>AROA_CHLTR</name>
<feature type="chain" id="PRO_0000088246" description="3-phosphoshikimate 1-carboxyvinyltransferase">
    <location>
        <begin position="1"/>
        <end position="440"/>
    </location>
</feature>
<feature type="active site" description="Proton acceptor" evidence="1">
    <location>
        <position position="310"/>
    </location>
</feature>
<feature type="binding site" evidence="1">
    <location>
        <position position="25"/>
    </location>
    <ligand>
        <name>3-phosphoshikimate</name>
        <dbReference type="ChEBI" id="CHEBI:145989"/>
    </ligand>
</feature>
<feature type="binding site" evidence="1">
    <location>
        <position position="25"/>
    </location>
    <ligand>
        <name>phosphoenolpyruvate</name>
        <dbReference type="ChEBI" id="CHEBI:58702"/>
    </ligand>
</feature>
<feature type="binding site" evidence="1">
    <location>
        <position position="26"/>
    </location>
    <ligand>
        <name>3-phosphoshikimate</name>
        <dbReference type="ChEBI" id="CHEBI:145989"/>
    </ligand>
</feature>
<feature type="binding site" evidence="1">
    <location>
        <position position="30"/>
    </location>
    <ligand>
        <name>3-phosphoshikimate</name>
        <dbReference type="ChEBI" id="CHEBI:145989"/>
    </ligand>
</feature>
<feature type="binding site" evidence="1">
    <location>
        <position position="96"/>
    </location>
    <ligand>
        <name>phosphoenolpyruvate</name>
        <dbReference type="ChEBI" id="CHEBI:58702"/>
    </ligand>
</feature>
<feature type="binding site" evidence="1">
    <location>
        <position position="124"/>
    </location>
    <ligand>
        <name>phosphoenolpyruvate</name>
        <dbReference type="ChEBI" id="CHEBI:58702"/>
    </ligand>
</feature>
<feature type="binding site" evidence="1">
    <location>
        <position position="168"/>
    </location>
    <ligand>
        <name>3-phosphoshikimate</name>
        <dbReference type="ChEBI" id="CHEBI:145989"/>
    </ligand>
</feature>
<feature type="binding site" evidence="1">
    <location>
        <position position="169"/>
    </location>
    <ligand>
        <name>3-phosphoshikimate</name>
        <dbReference type="ChEBI" id="CHEBI:145989"/>
    </ligand>
</feature>
<feature type="binding site" evidence="1">
    <location>
        <position position="169"/>
    </location>
    <ligand>
        <name>phosphoenolpyruvate</name>
        <dbReference type="ChEBI" id="CHEBI:58702"/>
    </ligand>
</feature>
<feature type="binding site" evidence="1">
    <location>
        <position position="310"/>
    </location>
    <ligand>
        <name>3-phosphoshikimate</name>
        <dbReference type="ChEBI" id="CHEBI:145989"/>
    </ligand>
</feature>
<feature type="binding site" evidence="1">
    <location>
        <position position="337"/>
    </location>
    <ligand>
        <name>3-phosphoshikimate</name>
        <dbReference type="ChEBI" id="CHEBI:145989"/>
    </ligand>
</feature>
<feature type="binding site" evidence="1">
    <location>
        <position position="341"/>
    </location>
    <ligand>
        <name>phosphoenolpyruvate</name>
        <dbReference type="ChEBI" id="CHEBI:58702"/>
    </ligand>
</feature>
<feature type="binding site" evidence="1">
    <location>
        <position position="382"/>
    </location>
    <ligand>
        <name>phosphoenolpyruvate</name>
        <dbReference type="ChEBI" id="CHEBI:58702"/>
    </ligand>
</feature>
<feature type="binding site" evidence="1">
    <location>
        <position position="409"/>
    </location>
    <ligand>
        <name>phosphoenolpyruvate</name>
        <dbReference type="ChEBI" id="CHEBI:58702"/>
    </ligand>
</feature>
<evidence type="ECO:0000255" key="1">
    <source>
        <dbReference type="HAMAP-Rule" id="MF_00210"/>
    </source>
</evidence>
<evidence type="ECO:0000305" key="2"/>
<proteinExistence type="inferred from homology"/>